<keyword id="KW-0052">Apoplast</keyword>
<keyword id="KW-1003">Cell membrane</keyword>
<keyword id="KW-0165">Cleavage on pair of basic residues</keyword>
<keyword id="KW-0472">Membrane</keyword>
<keyword id="KW-1185">Reference proteome</keyword>
<keyword id="KW-0964">Secreted</keyword>
<keyword id="KW-0732">Signal</keyword>
<reference key="1">
    <citation type="submission" date="1999-02" db="EMBL/GenBank/DDBJ databases">
        <title>Structural analysis of Arabidopsis thaliana chromosome 5. XI.</title>
        <authorList>
            <person name="Kaneko T."/>
            <person name="Katoh T."/>
            <person name="Asamizu E."/>
            <person name="Sato S."/>
            <person name="Nakamura Y."/>
            <person name="Kotani H."/>
            <person name="Tabata S."/>
        </authorList>
    </citation>
    <scope>NUCLEOTIDE SEQUENCE [LARGE SCALE GENOMIC DNA]</scope>
    <source>
        <strain>cv. Columbia</strain>
    </source>
</reference>
<reference key="2">
    <citation type="journal article" date="2017" name="Plant J.">
        <title>Araport11: a complete reannotation of the Arabidopsis thaliana reference genome.</title>
        <authorList>
            <person name="Cheng C.Y."/>
            <person name="Krishnakumar V."/>
            <person name="Chan A.P."/>
            <person name="Thibaud-Nissen F."/>
            <person name="Schobel S."/>
            <person name="Town C.D."/>
        </authorList>
    </citation>
    <scope>GENOME REANNOTATION</scope>
    <source>
        <strain>cv. Columbia</strain>
    </source>
</reference>
<reference key="3">
    <citation type="journal article" date="2019" name="J. Exp. Bot.">
        <title>The SCOOP12 peptide regulates defense response and root elongation in Arabidopsis thaliana.</title>
        <authorList>
            <person name="Gully K."/>
            <person name="Pelletier S."/>
            <person name="Guillou M.-C."/>
            <person name="Ferrand M."/>
            <person name="Aligon S."/>
            <person name="Pokotylo I."/>
            <person name="Perrin A."/>
            <person name="Vergne E."/>
            <person name="Fagard M."/>
            <person name="Ruelland E."/>
            <person name="Grappin P."/>
            <person name="Bucher E."/>
            <person name="Renou J.-P."/>
            <person name="Aubourg S."/>
        </authorList>
    </citation>
    <scope>GENE FAMILY</scope>
    <source>
        <strain>cv. Columbia</strain>
        <strain>cv. Wassilewskija</strain>
    </source>
</reference>
<reference key="4">
    <citation type="journal article" date="2021" name="Nat. Commun.">
        <title>Perception of a divergent family of phytocytokines by the Arabidopsis receptor kinase MIK2.</title>
        <authorList>
            <person name="Rhodes J."/>
            <person name="Yang H."/>
            <person name="Moussu S."/>
            <person name="Boutrot F."/>
            <person name="Santiago J."/>
            <person name="Zipfel C."/>
        </authorList>
    </citation>
    <scope>FUNCTION</scope>
    <scope>GENE FAMILY</scope>
    <source>
        <strain>cv. Columbia</strain>
        <strain>cv. Wassilewskija-2</strain>
    </source>
</reference>
<reference key="5">
    <citation type="journal article" date="2021" name="Nat. Commun.">
        <title>The Arabidopsis MIK2 receptor elicits immunity by sensing a conserved signature from phytocytokines and microbes.</title>
        <authorList>
            <person name="Hou S."/>
            <person name="Liu D."/>
            <person name="Huang S."/>
            <person name="Luo D."/>
            <person name="Liu Z."/>
            <person name="Xiang Q."/>
            <person name="Wang P."/>
            <person name="Mu R."/>
            <person name="Han Z."/>
            <person name="Chen S."/>
            <person name="Chai J."/>
            <person name="Shan L."/>
            <person name="He P."/>
        </authorList>
    </citation>
    <scope>TISSUE SPECIFICITY</scope>
    <scope>GENE FAMILY</scope>
    <scope>NOMENCLATURE</scope>
    <source>
        <strain>cv. Columbia</strain>
    </source>
</reference>
<reference key="6">
    <citation type="journal article" date="2022" name="Front. Plant Sci.">
        <title>The MIK2/SCOOP signaling system contributes to Arabidopsis resistance against herbivory by modulating jasmonate and indole glucosinolate biosynthesis.</title>
        <authorList>
            <person name="Stahl E."/>
            <person name="Fernandez Martin A."/>
            <person name="Glauser G."/>
            <person name="Guillou M.-C."/>
            <person name="Aubourg S."/>
            <person name="Renou J.-P."/>
            <person name="Reymond P."/>
        </authorList>
    </citation>
    <scope>INDUCTION BY INSECT HERBIVORY AND WOUNDING</scope>
    <source>
        <strain>cv. Columbia</strain>
        <strain>cv. Wassilewskija</strain>
    </source>
</reference>
<feature type="signal peptide" evidence="3">
    <location>
        <begin position="1"/>
        <end position="26"/>
    </location>
</feature>
<feature type="propeptide" id="PRO_0000457226" description="Removed in mature form" evidence="1">
    <location>
        <begin position="27"/>
        <end status="unknown"/>
    </location>
</feature>
<feature type="peptide" id="PRO_0000457227" description="Serine rich endogenous peptide 7" evidence="2">
    <location>
        <begin status="unknown"/>
        <end position="106"/>
    </location>
</feature>
<feature type="region of interest" description="Disordered" evidence="4">
    <location>
        <begin position="46"/>
        <end position="106"/>
    </location>
</feature>
<feature type="short sequence motif" description="SCOOP motif 1" evidence="11">
    <location>
        <begin position="58"/>
        <end position="72"/>
    </location>
</feature>
<feature type="short sequence motif" description="SxS motif essential for MIK2 binding" evidence="1">
    <location>
        <begin position="64"/>
        <end position="66"/>
    </location>
</feature>
<feature type="short sequence motif" description="SCOOP motif 2" evidence="11">
    <location>
        <begin position="86"/>
        <end position="100"/>
    </location>
</feature>
<feature type="short sequence motif" description="SxS motif essential for MIK2 binding" evidence="1">
    <location>
        <begin position="92"/>
        <end position="94"/>
    </location>
</feature>
<feature type="compositionally biased region" description="Basic and acidic residues" evidence="4">
    <location>
        <begin position="46"/>
        <end position="56"/>
    </location>
</feature>
<feature type="compositionally biased region" description="Basic and acidic residues" evidence="4">
    <location>
        <begin position="65"/>
        <end position="77"/>
    </location>
</feature>
<gene>
    <name evidence="8 9" type="primary">PROSCOOP7</name>
    <name evidence="8 9" type="synonym">SCOOP7</name>
    <name evidence="12" type="ordered locus">At5g44574</name>
    <name evidence="13" type="ORF">K15C23</name>
</gene>
<organism>
    <name type="scientific">Arabidopsis thaliana</name>
    <name type="common">Mouse-ear cress</name>
    <dbReference type="NCBI Taxonomy" id="3702"/>
    <lineage>
        <taxon>Eukaryota</taxon>
        <taxon>Viridiplantae</taxon>
        <taxon>Streptophyta</taxon>
        <taxon>Embryophyta</taxon>
        <taxon>Tracheophyta</taxon>
        <taxon>Spermatophyta</taxon>
        <taxon>Magnoliopsida</taxon>
        <taxon>eudicotyledons</taxon>
        <taxon>Gunneridae</taxon>
        <taxon>Pentapetalae</taxon>
        <taxon>rosids</taxon>
        <taxon>malvids</taxon>
        <taxon>Brassicales</taxon>
        <taxon>Brassicaceae</taxon>
        <taxon>Camelineae</taxon>
        <taxon>Arabidopsis</taxon>
    </lineage>
</organism>
<name>SCOP7_ARATH</name>
<dbReference type="EMBL" id="AB024024">
    <property type="status" value="NOT_ANNOTATED_CDS"/>
    <property type="molecule type" value="Genomic_DNA"/>
</dbReference>
<dbReference type="EMBL" id="CP002688">
    <property type="protein sequence ID" value="AED95130.1"/>
    <property type="molecule type" value="Genomic_DNA"/>
</dbReference>
<dbReference type="RefSeq" id="NP_001078712.1">
    <property type="nucleotide sequence ID" value="NM_001085243.2"/>
</dbReference>
<dbReference type="STRING" id="3702.A8MS31"/>
<dbReference type="PaxDb" id="3702-AT5G44574.1"/>
<dbReference type="PRIDE" id="A8MS31"/>
<dbReference type="EnsemblPlants" id="AT5G44574.1">
    <property type="protein sequence ID" value="AT5G44574.1"/>
    <property type="gene ID" value="AT5G44574"/>
</dbReference>
<dbReference type="GeneID" id="5008299"/>
<dbReference type="Gramene" id="AT5G44574.1">
    <property type="protein sequence ID" value="AT5G44574.1"/>
    <property type="gene ID" value="AT5G44574"/>
</dbReference>
<dbReference type="KEGG" id="ath:AT5G44574"/>
<dbReference type="Araport" id="AT5G44574"/>
<dbReference type="TAIR" id="AT5G44574"/>
<dbReference type="HOGENOM" id="CLU_2226866_0_0_1"/>
<dbReference type="InParanoid" id="A8MS31"/>
<dbReference type="OMA" id="SIYFPKA"/>
<dbReference type="PRO" id="PR:A8MS31"/>
<dbReference type="Proteomes" id="UP000006548">
    <property type="component" value="Chromosome 5"/>
</dbReference>
<dbReference type="ExpressionAtlas" id="A8MS31">
    <property type="expression patterns" value="baseline and differential"/>
</dbReference>
<dbReference type="GO" id="GO:0048046">
    <property type="term" value="C:apoplast"/>
    <property type="evidence" value="ECO:0000250"/>
    <property type="project" value="UniProtKB"/>
</dbReference>
<dbReference type="GO" id="GO:0005886">
    <property type="term" value="C:plasma membrane"/>
    <property type="evidence" value="ECO:0007669"/>
    <property type="project" value="UniProtKB-SubCell"/>
</dbReference>
<dbReference type="GO" id="GO:0030275">
    <property type="term" value="F:LRR domain binding"/>
    <property type="evidence" value="ECO:0000250"/>
    <property type="project" value="UniProtKB"/>
</dbReference>
<dbReference type="GO" id="GO:0033612">
    <property type="term" value="F:receptor serine/threonine kinase binding"/>
    <property type="evidence" value="ECO:0000250"/>
    <property type="project" value="UniProtKB"/>
</dbReference>
<dbReference type="GO" id="GO:0080027">
    <property type="term" value="P:response to herbivore"/>
    <property type="evidence" value="ECO:0000270"/>
    <property type="project" value="UniProtKB"/>
</dbReference>
<dbReference type="GO" id="GO:0009625">
    <property type="term" value="P:response to insect"/>
    <property type="evidence" value="ECO:0000270"/>
    <property type="project" value="UniProtKB"/>
</dbReference>
<dbReference type="GO" id="GO:0009611">
    <property type="term" value="P:response to wounding"/>
    <property type="evidence" value="ECO:0000270"/>
    <property type="project" value="UniProtKB"/>
</dbReference>
<accession>A8MS31</accession>
<protein>
    <recommendedName>
        <fullName evidence="8 9">Serine rich endogenous peptide 7</fullName>
        <shortName evidence="8 9">AtSCOOP7</shortName>
    </recommendedName>
    <alternativeName>
        <fullName evidence="8 9">Phytocytokine SCOOP7</fullName>
    </alternativeName>
    <alternativeName>
        <fullName evidence="8 9">Precursor of serine rich endogenous peptide phytocytokine 7</fullName>
    </alternativeName>
</protein>
<evidence type="ECO:0000250" key="1">
    <source>
        <dbReference type="UniProtKB" id="B3H7I1"/>
    </source>
</evidence>
<evidence type="ECO:0000250" key="2">
    <source>
        <dbReference type="UniProtKB" id="Q0WML3"/>
    </source>
</evidence>
<evidence type="ECO:0000255" key="3"/>
<evidence type="ECO:0000256" key="4">
    <source>
        <dbReference type="SAM" id="MobiDB-lite"/>
    </source>
</evidence>
<evidence type="ECO:0000269" key="5">
    <source>
    </source>
</evidence>
<evidence type="ECO:0000269" key="6">
    <source>
    </source>
</evidence>
<evidence type="ECO:0000269" key="7">
    <source>
    </source>
</evidence>
<evidence type="ECO:0000303" key="8">
    <source>
    </source>
</evidence>
<evidence type="ECO:0000303" key="9">
    <source>
    </source>
</evidence>
<evidence type="ECO:0000305" key="10"/>
<evidence type="ECO:0000305" key="11">
    <source>
    </source>
</evidence>
<evidence type="ECO:0000312" key="12">
    <source>
        <dbReference type="Araport" id="AT5G44574"/>
    </source>
</evidence>
<evidence type="ECO:0000312" key="13">
    <source>
        <dbReference type="EMBL" id="AB024024"/>
    </source>
</evidence>
<comment type="function">
    <text evidence="5">Brassicaceae-specific phytocytokine (plant endogenous peptide released into the apoplast) perceived by MIK2 in a BAK1/SERK3 and SERK4 coreceptors-dependent manner, that modulates various physiological and antimicrobial processes including growth prevention and reactive oxygen species (ROS) response regulation.</text>
</comment>
<comment type="subunit">
    <text evidence="1">Interacts with MIK2 (via extracellular leucine-rich repeat domain); this interaction triggers the formation of complex between MIK2 and the BAK1/SERK3 and SERK4 coreceptors, and subsequent BAK1 activation by phosphorylation.</text>
</comment>
<comment type="subcellular location">
    <subcellularLocation>
        <location evidence="1">Cell membrane</location>
    </subcellularLocation>
    <subcellularLocation>
        <location evidence="1">Secreted</location>
        <location evidence="1">Extracellular space</location>
        <location evidence="1">Apoplast</location>
    </subcellularLocation>
    <text evidence="1">The precursor of SCOOP7, PROSCOOP7, accumulates at the plasma membrane and is proteolytically cleaved to release the SCOOP7 in the apoplasm.</text>
</comment>
<comment type="tissue specificity">
    <text evidence="6">Mostly expressed in roots, and, to a lower extent, in seedlings shoots.</text>
</comment>
<comment type="induction">
    <text evidence="7">Accumulates upon infection by generalist herbivores such as Spodoptera littoralis (PubMed:35401621). Induced by wounding (PubMed:35401621).</text>
</comment>
<comment type="similarity">
    <text evidence="10">Belongs to the serine rich endogenous peptide (SCOOP) phytocytokine family.</text>
</comment>
<sequence>MGKKCSSKFRQMLVLVLLLIVFTCLSVTAPLSVTAKPTSFKVKARGIEDEGQERTHSLNSKKSSRSVEKTHHSEGRRLSNVFPNAGIRAGPSKSGQGGGRIPVAAS</sequence>
<proteinExistence type="evidence at transcript level"/>